<gene>
    <name evidence="1" type="primary">rpsU</name>
    <name type="ordered locus">Gbem_3698</name>
</gene>
<reference key="1">
    <citation type="submission" date="2008-07" db="EMBL/GenBank/DDBJ databases">
        <title>Complete sequence of Geobacter bemidjiensis BEM.</title>
        <authorList>
            <consortium name="US DOE Joint Genome Institute"/>
            <person name="Lucas S."/>
            <person name="Copeland A."/>
            <person name="Lapidus A."/>
            <person name="Glavina del Rio T."/>
            <person name="Dalin E."/>
            <person name="Tice H."/>
            <person name="Bruce D."/>
            <person name="Goodwin L."/>
            <person name="Pitluck S."/>
            <person name="Kiss H."/>
            <person name="Brettin T."/>
            <person name="Detter J.C."/>
            <person name="Han C."/>
            <person name="Kuske C.R."/>
            <person name="Schmutz J."/>
            <person name="Larimer F."/>
            <person name="Land M."/>
            <person name="Hauser L."/>
            <person name="Kyrpides N."/>
            <person name="Lykidis A."/>
            <person name="Lovley D."/>
            <person name="Richardson P."/>
        </authorList>
    </citation>
    <scope>NUCLEOTIDE SEQUENCE [LARGE SCALE GENOMIC DNA]</scope>
    <source>
        <strain>ATCC BAA-1014 / DSM 16622 / JCM 12645 / Bem</strain>
    </source>
</reference>
<name>RS21_CITBB</name>
<protein>
    <recommendedName>
        <fullName evidence="1">Small ribosomal subunit protein bS21</fullName>
    </recommendedName>
    <alternativeName>
        <fullName evidence="2">30S ribosomal protein S21</fullName>
    </alternativeName>
</protein>
<keyword id="KW-1185">Reference proteome</keyword>
<keyword id="KW-0687">Ribonucleoprotein</keyword>
<keyword id="KW-0689">Ribosomal protein</keyword>
<organism>
    <name type="scientific">Citrifermentans bemidjiense (strain ATCC BAA-1014 / DSM 16622 / JCM 12645 / Bem)</name>
    <name type="common">Geobacter bemidjiensis</name>
    <dbReference type="NCBI Taxonomy" id="404380"/>
    <lineage>
        <taxon>Bacteria</taxon>
        <taxon>Pseudomonadati</taxon>
        <taxon>Thermodesulfobacteriota</taxon>
        <taxon>Desulfuromonadia</taxon>
        <taxon>Geobacterales</taxon>
        <taxon>Geobacteraceae</taxon>
        <taxon>Citrifermentans</taxon>
    </lineage>
</organism>
<dbReference type="EMBL" id="CP001124">
    <property type="protein sequence ID" value="ACH40690.1"/>
    <property type="molecule type" value="Genomic_DNA"/>
</dbReference>
<dbReference type="RefSeq" id="WP_011940832.1">
    <property type="nucleotide sequence ID" value="NC_011146.1"/>
</dbReference>
<dbReference type="SMR" id="B5EDR2"/>
<dbReference type="STRING" id="404380.Gbem_3698"/>
<dbReference type="KEGG" id="gbm:Gbem_3698"/>
<dbReference type="eggNOG" id="COG0828">
    <property type="taxonomic scope" value="Bacteria"/>
</dbReference>
<dbReference type="HOGENOM" id="CLU_159258_1_2_7"/>
<dbReference type="OrthoDB" id="9799244at2"/>
<dbReference type="Proteomes" id="UP000008825">
    <property type="component" value="Chromosome"/>
</dbReference>
<dbReference type="GO" id="GO:1990904">
    <property type="term" value="C:ribonucleoprotein complex"/>
    <property type="evidence" value="ECO:0007669"/>
    <property type="project" value="UniProtKB-KW"/>
</dbReference>
<dbReference type="GO" id="GO:0005840">
    <property type="term" value="C:ribosome"/>
    <property type="evidence" value="ECO:0007669"/>
    <property type="project" value="UniProtKB-KW"/>
</dbReference>
<dbReference type="GO" id="GO:0003735">
    <property type="term" value="F:structural constituent of ribosome"/>
    <property type="evidence" value="ECO:0007669"/>
    <property type="project" value="InterPro"/>
</dbReference>
<dbReference type="GO" id="GO:0006412">
    <property type="term" value="P:translation"/>
    <property type="evidence" value="ECO:0007669"/>
    <property type="project" value="UniProtKB-UniRule"/>
</dbReference>
<dbReference type="Gene3D" id="1.20.5.1150">
    <property type="entry name" value="Ribosomal protein S8"/>
    <property type="match status" value="1"/>
</dbReference>
<dbReference type="HAMAP" id="MF_00358">
    <property type="entry name" value="Ribosomal_bS21"/>
    <property type="match status" value="1"/>
</dbReference>
<dbReference type="InterPro" id="IPR001911">
    <property type="entry name" value="Ribosomal_bS21"/>
</dbReference>
<dbReference type="InterPro" id="IPR038380">
    <property type="entry name" value="Ribosomal_bS21_sf"/>
</dbReference>
<dbReference type="NCBIfam" id="TIGR00030">
    <property type="entry name" value="S21p"/>
    <property type="match status" value="1"/>
</dbReference>
<dbReference type="PANTHER" id="PTHR21109">
    <property type="entry name" value="MITOCHONDRIAL 28S RIBOSOMAL PROTEIN S21"/>
    <property type="match status" value="1"/>
</dbReference>
<dbReference type="PANTHER" id="PTHR21109:SF22">
    <property type="entry name" value="SMALL RIBOSOMAL SUBUNIT PROTEIN BS21"/>
    <property type="match status" value="1"/>
</dbReference>
<dbReference type="Pfam" id="PF01165">
    <property type="entry name" value="Ribosomal_S21"/>
    <property type="match status" value="1"/>
</dbReference>
<dbReference type="PRINTS" id="PR00976">
    <property type="entry name" value="RIBOSOMALS21"/>
</dbReference>
<sequence>MPGVKVKEAEPFELALKKFKKQCEKAGILSEVRKREHYEKPSIKKKKKAIAARKRALKKQRKMVD</sequence>
<proteinExistence type="inferred from homology"/>
<evidence type="ECO:0000255" key="1">
    <source>
        <dbReference type="HAMAP-Rule" id="MF_00358"/>
    </source>
</evidence>
<evidence type="ECO:0000305" key="2"/>
<feature type="chain" id="PRO_1000120624" description="Small ribosomal subunit protein bS21">
    <location>
        <begin position="1"/>
        <end position="65"/>
    </location>
</feature>
<accession>B5EDR2</accession>
<comment type="similarity">
    <text evidence="1">Belongs to the bacterial ribosomal protein bS21 family.</text>
</comment>